<sequence length="436" mass="50031">MLEALFRDSVEEAINDSIKEGVVLAVYNTARDDQWLKSWFKGDDVSLDTLAEHSIWLRLVKDTEQFQLFEQVFPNVVVPSIYLIRAGKIELIIQGEDDRHWEKLLACIGIKDKKAGESSSRETNPGLAREEKSSRDVHRKNARERIAETTLEIQRREQLKQRKLAEEERERIIRLVRADRAERKALDETHHRTLDDDKPLDVHDYIKDAQKLHSSKCVLQIRMTDGKTLKHEFNSSETLNDVRKWVDVNRTDGDCPYSFHRGIPRVTFKDSDELKTLETLELTPRSALLLKPLETQNSGLSVTGMEGPSLLGRLYKGFSTWWHNDKDPEVTSQREETSKPNRHEVRSSTPLSGAASSSCFQYNNVREPVQSSAHASPMLTPSGTRYPSETNLTTSRSVSPNVFQFVNNDHQEDPEDPTTFNGNNVHLEKKKDEDKK</sequence>
<name>UBX7_YEAST</name>
<keyword id="KW-0256">Endoplasmic reticulum</keyword>
<keyword id="KW-1017">Isopeptide bond</keyword>
<keyword id="KW-0597">Phosphoprotein</keyword>
<keyword id="KW-1185">Reference proteome</keyword>
<keyword id="KW-0832">Ubl conjugation</keyword>
<keyword id="KW-0833">Ubl conjugation pathway</keyword>
<dbReference type="EMBL" id="Z36142">
    <property type="protein sequence ID" value="CAA85236.1"/>
    <property type="molecule type" value="Genomic_DNA"/>
</dbReference>
<dbReference type="EMBL" id="BK006936">
    <property type="protein sequence ID" value="DAA07389.1"/>
    <property type="molecule type" value="Genomic_DNA"/>
</dbReference>
<dbReference type="PIR" id="S46154">
    <property type="entry name" value="S46154"/>
</dbReference>
<dbReference type="RefSeq" id="NP_009832.1">
    <property type="nucleotide sequence ID" value="NM_001178621.1"/>
</dbReference>
<dbReference type="SMR" id="P38349"/>
<dbReference type="BioGRID" id="32968">
    <property type="interactions" value="64"/>
</dbReference>
<dbReference type="DIP" id="DIP-4498N"/>
<dbReference type="FunCoup" id="P38349">
    <property type="interactions" value="157"/>
</dbReference>
<dbReference type="IntAct" id="P38349">
    <property type="interactions" value="5"/>
</dbReference>
<dbReference type="MINT" id="P38349"/>
<dbReference type="STRING" id="4932.YBR273C"/>
<dbReference type="iPTMnet" id="P38349"/>
<dbReference type="PaxDb" id="4932-YBR273C"/>
<dbReference type="PeptideAtlas" id="P38349"/>
<dbReference type="EnsemblFungi" id="YBR273C_mRNA">
    <property type="protein sequence ID" value="YBR273C"/>
    <property type="gene ID" value="YBR273C"/>
</dbReference>
<dbReference type="GeneID" id="852576"/>
<dbReference type="KEGG" id="sce:YBR273C"/>
<dbReference type="AGR" id="SGD:S000000477"/>
<dbReference type="SGD" id="S000000477">
    <property type="gene designation" value="UBX7"/>
</dbReference>
<dbReference type="VEuPathDB" id="FungiDB:YBR273C"/>
<dbReference type="eggNOG" id="KOG2689">
    <property type="taxonomic scope" value="Eukaryota"/>
</dbReference>
<dbReference type="GeneTree" id="ENSGT00940000176709"/>
<dbReference type="HOGENOM" id="CLU_034966_0_0_1"/>
<dbReference type="InParanoid" id="P38349"/>
<dbReference type="OMA" id="NDVRTWV"/>
<dbReference type="OrthoDB" id="2445133at2759"/>
<dbReference type="BioCyc" id="YEAST:G3O-29194-MONOMER"/>
<dbReference type="BioGRID-ORCS" id="852576">
    <property type="hits" value="0 hits in 10 CRISPR screens"/>
</dbReference>
<dbReference type="PRO" id="PR:P38349"/>
<dbReference type="Proteomes" id="UP000002311">
    <property type="component" value="Chromosome II"/>
</dbReference>
<dbReference type="RNAct" id="P38349">
    <property type="molecule type" value="protein"/>
</dbReference>
<dbReference type="GO" id="GO:0005783">
    <property type="term" value="C:endoplasmic reticulum"/>
    <property type="evidence" value="ECO:0007005"/>
    <property type="project" value="SGD"/>
</dbReference>
<dbReference type="GO" id="GO:0005635">
    <property type="term" value="C:nuclear envelope"/>
    <property type="evidence" value="ECO:0000314"/>
    <property type="project" value="SGD"/>
</dbReference>
<dbReference type="GO" id="GO:0036503">
    <property type="term" value="P:ERAD pathway"/>
    <property type="evidence" value="ECO:0000318"/>
    <property type="project" value="GO_Central"/>
</dbReference>
<dbReference type="GO" id="GO:0030435">
    <property type="term" value="P:sporulation resulting in formation of a cellular spore"/>
    <property type="evidence" value="ECO:0000315"/>
    <property type="project" value="SGD"/>
</dbReference>
<dbReference type="GO" id="GO:0006511">
    <property type="term" value="P:ubiquitin-dependent protein catabolic process"/>
    <property type="evidence" value="ECO:0000315"/>
    <property type="project" value="SGD"/>
</dbReference>
<dbReference type="CDD" id="cd01767">
    <property type="entry name" value="UBX"/>
    <property type="match status" value="1"/>
</dbReference>
<dbReference type="FunFam" id="3.10.20.90:FF:000363">
    <property type="entry name" value="Ubiquitin regulatory X"/>
    <property type="match status" value="1"/>
</dbReference>
<dbReference type="Gene3D" id="3.10.20.90">
    <property type="entry name" value="Phosphatidylinositol 3-kinase Catalytic Subunit, Chain A, domain 1"/>
    <property type="match status" value="1"/>
</dbReference>
<dbReference type="InterPro" id="IPR029071">
    <property type="entry name" value="Ubiquitin-like_domsf"/>
</dbReference>
<dbReference type="InterPro" id="IPR001012">
    <property type="entry name" value="UBX_dom"/>
</dbReference>
<dbReference type="PANTHER" id="PTHR46424">
    <property type="entry name" value="UBX DOMAIN-CONTAINING PROTEIN 4"/>
    <property type="match status" value="1"/>
</dbReference>
<dbReference type="PANTHER" id="PTHR46424:SF1">
    <property type="entry name" value="UBX DOMAIN-CONTAINING PROTEIN 4"/>
    <property type="match status" value="1"/>
</dbReference>
<dbReference type="Pfam" id="PF00789">
    <property type="entry name" value="UBX"/>
    <property type="match status" value="1"/>
</dbReference>
<dbReference type="Pfam" id="PF23187">
    <property type="entry name" value="UBX7_N"/>
    <property type="match status" value="1"/>
</dbReference>
<dbReference type="SMART" id="SM00166">
    <property type="entry name" value="UBX"/>
    <property type="match status" value="1"/>
</dbReference>
<dbReference type="SUPFAM" id="SSF54236">
    <property type="entry name" value="Ubiquitin-like"/>
    <property type="match status" value="1"/>
</dbReference>
<dbReference type="PROSITE" id="PS50033">
    <property type="entry name" value="UBX"/>
    <property type="match status" value="1"/>
</dbReference>
<evidence type="ECO:0000250" key="1"/>
<evidence type="ECO:0000255" key="2">
    <source>
        <dbReference type="PROSITE-ProRule" id="PRU00215"/>
    </source>
</evidence>
<evidence type="ECO:0000256" key="3">
    <source>
        <dbReference type="SAM" id="MobiDB-lite"/>
    </source>
</evidence>
<evidence type="ECO:0000269" key="4">
    <source>
    </source>
</evidence>
<evidence type="ECO:0000269" key="5">
    <source>
    </source>
</evidence>
<evidence type="ECO:0000269" key="6">
    <source>
    </source>
</evidence>
<evidence type="ECO:0007744" key="7">
    <source>
    </source>
</evidence>
<evidence type="ECO:0007744" key="8">
    <source>
    </source>
</evidence>
<evidence type="ECO:0007744" key="9">
    <source>
    </source>
</evidence>
<gene>
    <name type="primary">UBX7</name>
    <name type="ordered locus">YBR273C</name>
    <name type="ORF">YBR1741</name>
</gene>
<accession>P38349</accession>
<accession>D6VQR9</accession>
<proteinExistence type="evidence at protein level"/>
<feature type="chain" id="PRO_0000211004" description="UBX domain-containing protein 7">
    <location>
        <begin position="1"/>
        <end position="436"/>
    </location>
</feature>
<feature type="domain" description="UBX" evidence="2">
    <location>
        <begin position="212"/>
        <end position="290"/>
    </location>
</feature>
<feature type="region of interest" description="Disordered" evidence="3">
    <location>
        <begin position="115"/>
        <end position="141"/>
    </location>
</feature>
<feature type="region of interest" description="Disordered" evidence="3">
    <location>
        <begin position="325"/>
        <end position="357"/>
    </location>
</feature>
<feature type="region of interest" description="Disordered" evidence="3">
    <location>
        <begin position="371"/>
        <end position="436"/>
    </location>
</feature>
<feature type="compositionally biased region" description="Basic and acidic residues" evidence="3">
    <location>
        <begin position="325"/>
        <end position="346"/>
    </location>
</feature>
<feature type="compositionally biased region" description="Low complexity" evidence="3">
    <location>
        <begin position="347"/>
        <end position="357"/>
    </location>
</feature>
<feature type="compositionally biased region" description="Polar residues" evidence="3">
    <location>
        <begin position="371"/>
        <end position="408"/>
    </location>
</feature>
<feature type="compositionally biased region" description="Basic and acidic residues" evidence="3">
    <location>
        <begin position="426"/>
        <end position="436"/>
    </location>
</feature>
<feature type="modified residue" description="Phosphoserine" evidence="7 8">
    <location>
        <position position="388"/>
    </location>
</feature>
<feature type="cross-link" description="Glycyl lysine isopeptide (Lys-Gly) (interchain with G-Cter in ubiquitin)" evidence="9">
    <location>
        <position position="19"/>
    </location>
</feature>
<reference key="1">
    <citation type="journal article" date="1994" name="EMBO J.">
        <title>Complete DNA sequence of yeast chromosome II.</title>
        <authorList>
            <person name="Feldmann H."/>
            <person name="Aigle M."/>
            <person name="Aljinovic G."/>
            <person name="Andre B."/>
            <person name="Baclet M.C."/>
            <person name="Barthe C."/>
            <person name="Baur A."/>
            <person name="Becam A.-M."/>
            <person name="Biteau N."/>
            <person name="Boles E."/>
            <person name="Brandt T."/>
            <person name="Brendel M."/>
            <person name="Brueckner M."/>
            <person name="Bussereau F."/>
            <person name="Christiansen C."/>
            <person name="Contreras R."/>
            <person name="Crouzet M."/>
            <person name="Cziepluch C."/>
            <person name="Demolis N."/>
            <person name="Delaveau T."/>
            <person name="Doignon F."/>
            <person name="Domdey H."/>
            <person name="Duesterhus S."/>
            <person name="Dubois E."/>
            <person name="Dujon B."/>
            <person name="El Bakkoury M."/>
            <person name="Entian K.-D."/>
            <person name="Feuermann M."/>
            <person name="Fiers W."/>
            <person name="Fobo G.M."/>
            <person name="Fritz C."/>
            <person name="Gassenhuber J."/>
            <person name="Glansdorff N."/>
            <person name="Goffeau A."/>
            <person name="Grivell L.A."/>
            <person name="de Haan M."/>
            <person name="Hein C."/>
            <person name="Herbert C.J."/>
            <person name="Hollenberg C.P."/>
            <person name="Holmstroem K."/>
            <person name="Jacq C."/>
            <person name="Jacquet M."/>
            <person name="Jauniaux J.-C."/>
            <person name="Jonniaux J.-L."/>
            <person name="Kallesoee T."/>
            <person name="Kiesau P."/>
            <person name="Kirchrath L."/>
            <person name="Koetter P."/>
            <person name="Korol S."/>
            <person name="Liebl S."/>
            <person name="Logghe M."/>
            <person name="Lohan A.J.E."/>
            <person name="Louis E.J."/>
            <person name="Li Z.Y."/>
            <person name="Maat M.J."/>
            <person name="Mallet L."/>
            <person name="Mannhaupt G."/>
            <person name="Messenguy F."/>
            <person name="Miosga T."/>
            <person name="Molemans F."/>
            <person name="Mueller S."/>
            <person name="Nasr F."/>
            <person name="Obermaier B."/>
            <person name="Perea J."/>
            <person name="Pierard A."/>
            <person name="Piravandi E."/>
            <person name="Pohl F.M."/>
            <person name="Pohl T.M."/>
            <person name="Potier S."/>
            <person name="Proft M."/>
            <person name="Purnelle B."/>
            <person name="Ramezani Rad M."/>
            <person name="Rieger M."/>
            <person name="Rose M."/>
            <person name="Schaaff-Gerstenschlaeger I."/>
            <person name="Scherens B."/>
            <person name="Schwarzlose C."/>
            <person name="Skala J."/>
            <person name="Slonimski P.P."/>
            <person name="Smits P.H.M."/>
            <person name="Souciet J.-L."/>
            <person name="Steensma H.Y."/>
            <person name="Stucka R."/>
            <person name="Urrestarazu L.A."/>
            <person name="van der Aart Q.J.M."/>
            <person name="Van Dyck L."/>
            <person name="Vassarotti A."/>
            <person name="Vetter I."/>
            <person name="Vierendeels F."/>
            <person name="Vissers S."/>
            <person name="Wagner G."/>
            <person name="de Wergifosse P."/>
            <person name="Wolfe K.H."/>
            <person name="Zagulski M."/>
            <person name="Zimmermann F.K."/>
            <person name="Mewes H.-W."/>
            <person name="Kleine K."/>
        </authorList>
    </citation>
    <scope>NUCLEOTIDE SEQUENCE [LARGE SCALE GENOMIC DNA]</scope>
    <source>
        <strain>ATCC 204508 / S288c</strain>
    </source>
</reference>
<reference key="2">
    <citation type="journal article" date="2014" name="G3 (Bethesda)">
        <title>The reference genome sequence of Saccharomyces cerevisiae: Then and now.</title>
        <authorList>
            <person name="Engel S.R."/>
            <person name="Dietrich F.S."/>
            <person name="Fisk D.G."/>
            <person name="Binkley G."/>
            <person name="Balakrishnan R."/>
            <person name="Costanzo M.C."/>
            <person name="Dwight S.S."/>
            <person name="Hitz B.C."/>
            <person name="Karra K."/>
            <person name="Nash R.S."/>
            <person name="Weng S."/>
            <person name="Wong E.D."/>
            <person name="Lloyd P."/>
            <person name="Skrzypek M.S."/>
            <person name="Miyasato S.R."/>
            <person name="Simison M."/>
            <person name="Cherry J.M."/>
        </authorList>
    </citation>
    <scope>GENOME REANNOTATION</scope>
    <source>
        <strain>ATCC 204508 / S288c</strain>
    </source>
</reference>
<reference key="3">
    <citation type="journal article" date="2003" name="Nature">
        <title>Global analysis of protein localization in budding yeast.</title>
        <authorList>
            <person name="Huh W.-K."/>
            <person name="Falvo J.V."/>
            <person name="Gerke L.C."/>
            <person name="Carroll A.S."/>
            <person name="Howson R.W."/>
            <person name="Weissman J.S."/>
            <person name="O'Shea E.K."/>
        </authorList>
    </citation>
    <scope>SUBCELLULAR LOCATION [LARGE SCALE ANALYSIS]</scope>
</reference>
<reference key="4">
    <citation type="journal article" date="2003" name="Nature">
        <title>Global analysis of protein expression in yeast.</title>
        <authorList>
            <person name="Ghaemmaghami S."/>
            <person name="Huh W.-K."/>
            <person name="Bower K."/>
            <person name="Howson R.W."/>
            <person name="Belle A."/>
            <person name="Dephoure N."/>
            <person name="O'Shea E.K."/>
            <person name="Weissman J.S."/>
        </authorList>
    </citation>
    <scope>LEVEL OF PROTEIN EXPRESSION [LARGE SCALE ANALYSIS]</scope>
</reference>
<reference key="5">
    <citation type="journal article" date="2004" name="EMBO Rep.">
        <title>Shp1 and Ubx2 are adaptors of Cdc48 involved in ubiquitin-dependent protein degradation.</title>
        <authorList>
            <person name="Schuberth C."/>
            <person name="Richly H."/>
            <person name="Rumpf S."/>
            <person name="Buchberger A."/>
        </authorList>
    </citation>
    <scope>INTERACTION WITH CDC48</scope>
</reference>
<reference key="6">
    <citation type="journal article" date="2008" name="Mol. Cell. Proteomics">
        <title>A multidimensional chromatography technology for in-depth phosphoproteome analysis.</title>
        <authorList>
            <person name="Albuquerque C.P."/>
            <person name="Smolka M.B."/>
            <person name="Payne S.H."/>
            <person name="Bafna V."/>
            <person name="Eng J."/>
            <person name="Zhou H."/>
        </authorList>
    </citation>
    <scope>PHOSPHORYLATION [LARGE SCALE ANALYSIS] AT SER-388</scope>
    <scope>IDENTIFICATION BY MASS SPECTROMETRY [LARGE SCALE ANALYSIS]</scope>
</reference>
<reference key="7">
    <citation type="journal article" date="2009" name="Science">
        <title>Global analysis of Cdk1 substrate phosphorylation sites provides insights into evolution.</title>
        <authorList>
            <person name="Holt L.J."/>
            <person name="Tuch B.B."/>
            <person name="Villen J."/>
            <person name="Johnson A.D."/>
            <person name="Gygi S.P."/>
            <person name="Morgan D.O."/>
        </authorList>
    </citation>
    <scope>PHOSPHORYLATION [LARGE SCALE ANALYSIS] AT SER-388</scope>
    <scope>IDENTIFICATION BY MASS SPECTROMETRY [LARGE SCALE ANALYSIS]</scope>
</reference>
<reference key="8">
    <citation type="journal article" date="2012" name="Proc. Natl. Acad. Sci. U.S.A.">
        <title>N-terminal acetylome analyses and functional insights of the N-terminal acetyltransferase NatB.</title>
        <authorList>
            <person name="Van Damme P."/>
            <person name="Lasa M."/>
            <person name="Polevoda B."/>
            <person name="Gazquez C."/>
            <person name="Elosegui-Artola A."/>
            <person name="Kim D.S."/>
            <person name="De Juan-Pardo E."/>
            <person name="Demeyer K."/>
            <person name="Hole K."/>
            <person name="Larrea E."/>
            <person name="Timmerman E."/>
            <person name="Prieto J."/>
            <person name="Arnesen T."/>
            <person name="Sherman F."/>
            <person name="Gevaert K."/>
            <person name="Aldabe R."/>
        </authorList>
    </citation>
    <scope>IDENTIFICATION BY MASS SPECTROMETRY [LARGE SCALE ANALYSIS]</scope>
</reference>
<reference key="9">
    <citation type="journal article" date="2012" name="Proteomics">
        <title>Sites of ubiquitin attachment in Saccharomyces cerevisiae.</title>
        <authorList>
            <person name="Starita L.M."/>
            <person name="Lo R.S."/>
            <person name="Eng J.K."/>
            <person name="von Haller P.D."/>
            <person name="Fields S."/>
        </authorList>
    </citation>
    <scope>UBIQUITINATION [LARGE SCALE ANALYSIS] AT LYS-19</scope>
    <scope>IDENTIFICATION BY MASS SPECTROMETRY [LARGE SCALE ANALYSIS]</scope>
</reference>
<organism>
    <name type="scientific">Saccharomyces cerevisiae (strain ATCC 204508 / S288c)</name>
    <name type="common">Baker's yeast</name>
    <dbReference type="NCBI Taxonomy" id="559292"/>
    <lineage>
        <taxon>Eukaryota</taxon>
        <taxon>Fungi</taxon>
        <taxon>Dikarya</taxon>
        <taxon>Ascomycota</taxon>
        <taxon>Saccharomycotina</taxon>
        <taxon>Saccharomycetes</taxon>
        <taxon>Saccharomycetales</taxon>
        <taxon>Saccharomycetaceae</taxon>
        <taxon>Saccharomyces</taxon>
    </lineage>
</organism>
<comment type="function">
    <text evidence="1">Involved in CDC48-dependent protein degradation through the ubiquitin/proteasome pathway.</text>
</comment>
<comment type="subunit">
    <text evidence="6">Interacts with CDC48.</text>
</comment>
<comment type="interaction">
    <interactant intactId="EBI-21157">
        <id>P38349</id>
    </interactant>
    <interactant intactId="EBI-4308">
        <id>P25694</id>
        <label>CDC48</label>
    </interactant>
    <organismsDiffer>false</organismsDiffer>
    <experiments>5</experiments>
</comment>
<comment type="interaction">
    <interactant intactId="EBI-21157">
        <id>P38349</id>
    </interactant>
    <interactant intactId="EBI-33192">
        <id>Q12743</id>
        <label>DFM1</label>
    </interactant>
    <organismsDiffer>false</organismsDiffer>
    <experiments>3</experiments>
</comment>
<comment type="subcellular location">
    <subcellularLocation>
        <location evidence="4">Endoplasmic reticulum</location>
    </subcellularLocation>
</comment>
<comment type="miscellaneous">
    <text evidence="5">Present with 2190 molecules/cell in log phase SD medium.</text>
</comment>
<protein>
    <recommendedName>
        <fullName>UBX domain-containing protein 7</fullName>
    </recommendedName>
</protein>